<accession>B0U4R4</accession>
<keyword id="KW-0067">ATP-binding</keyword>
<keyword id="KW-0418">Kinase</keyword>
<keyword id="KW-0441">Lipid A biosynthesis</keyword>
<keyword id="KW-0444">Lipid biosynthesis</keyword>
<keyword id="KW-0443">Lipid metabolism</keyword>
<keyword id="KW-0547">Nucleotide-binding</keyword>
<keyword id="KW-0808">Transferase</keyword>
<organism>
    <name type="scientific">Xylella fastidiosa (strain M12)</name>
    <dbReference type="NCBI Taxonomy" id="405440"/>
    <lineage>
        <taxon>Bacteria</taxon>
        <taxon>Pseudomonadati</taxon>
        <taxon>Pseudomonadota</taxon>
        <taxon>Gammaproteobacteria</taxon>
        <taxon>Lysobacterales</taxon>
        <taxon>Lysobacteraceae</taxon>
        <taxon>Xylella</taxon>
    </lineage>
</organism>
<name>LPXK_XYLFM</name>
<evidence type="ECO:0000255" key="1">
    <source>
        <dbReference type="HAMAP-Rule" id="MF_00409"/>
    </source>
</evidence>
<feature type="chain" id="PRO_1000134755" description="Tetraacyldisaccharide 4'-kinase">
    <location>
        <begin position="1"/>
        <end position="339"/>
    </location>
</feature>
<feature type="binding site" evidence="1">
    <location>
        <begin position="62"/>
        <end position="69"/>
    </location>
    <ligand>
        <name>ATP</name>
        <dbReference type="ChEBI" id="CHEBI:30616"/>
    </ligand>
</feature>
<comment type="function">
    <text evidence="1">Transfers the gamma-phosphate of ATP to the 4'-position of a tetraacyldisaccharide 1-phosphate intermediate (termed DS-1-P) to form tetraacyldisaccharide 1,4'-bis-phosphate (lipid IVA).</text>
</comment>
<comment type="catalytic activity">
    <reaction evidence="1">
        <text>a lipid A disaccharide + ATP = a lipid IVA + ADP + H(+)</text>
        <dbReference type="Rhea" id="RHEA:67840"/>
        <dbReference type="ChEBI" id="CHEBI:15378"/>
        <dbReference type="ChEBI" id="CHEBI:30616"/>
        <dbReference type="ChEBI" id="CHEBI:176343"/>
        <dbReference type="ChEBI" id="CHEBI:176425"/>
        <dbReference type="ChEBI" id="CHEBI:456216"/>
        <dbReference type="EC" id="2.7.1.130"/>
    </reaction>
</comment>
<comment type="pathway">
    <text evidence="1">Glycolipid biosynthesis; lipid IV(A) biosynthesis; lipid IV(A) from (3R)-3-hydroxytetradecanoyl-[acyl-carrier-protein] and UDP-N-acetyl-alpha-D-glucosamine: step 6/6.</text>
</comment>
<comment type="similarity">
    <text evidence="1">Belongs to the LpxK family.</text>
</comment>
<protein>
    <recommendedName>
        <fullName evidence="1">Tetraacyldisaccharide 4'-kinase</fullName>
        <ecNumber evidence="1">2.7.1.130</ecNumber>
    </recommendedName>
    <alternativeName>
        <fullName evidence="1">Lipid A 4'-kinase</fullName>
    </alternativeName>
</protein>
<sequence>MSSGRGSRIPEYWYGQVPVPPFMRFMEVIYAGAVSLRRLAYRRGWRRRYGVAVPVVVIGNLVAGGTGKTPLTIEIVARLREAGWTPGIASRGYGRRDLKTPRWIQPDTPIELAGDEPAMIAWKTGMRVRVDVDRSAAACALVAEGCDIVVCDDGLQHYRLMRDIEIEVIDGQRRYGNGHLLPAGPLREPMVRGRLCDFRVLNAGQYSDRPTSGFGPGDWQMRLHIDHAQSLQGSRRRSLDAFSGQRVHAVAGIAHPERFFSMLRQRGIGVVPHAFPDHHFYRAEDFTFGSRLPVLMTEKDAVKCRAFADDWFFSVPLRVELPTVFWTALFDRLERLVSC</sequence>
<reference key="1">
    <citation type="journal article" date="2010" name="J. Bacteriol.">
        <title>Whole genome sequences of two Xylella fastidiosa strains (M12 and M23) causing almond leaf scorch disease in California.</title>
        <authorList>
            <person name="Chen J."/>
            <person name="Xie G."/>
            <person name="Han S."/>
            <person name="Chertkov O."/>
            <person name="Sims D."/>
            <person name="Civerolo E.L."/>
        </authorList>
    </citation>
    <scope>NUCLEOTIDE SEQUENCE [LARGE SCALE GENOMIC DNA]</scope>
    <source>
        <strain>M12</strain>
    </source>
</reference>
<dbReference type="EC" id="2.7.1.130" evidence="1"/>
<dbReference type="EMBL" id="CP000941">
    <property type="protein sequence ID" value="ACA11404.1"/>
    <property type="molecule type" value="Genomic_DNA"/>
</dbReference>
<dbReference type="RefSeq" id="WP_004085186.1">
    <property type="nucleotide sequence ID" value="NC_010513.1"/>
</dbReference>
<dbReference type="SMR" id="B0U4R4"/>
<dbReference type="KEGG" id="xfm:Xfasm12_0390"/>
<dbReference type="HOGENOM" id="CLU_038816_2_0_6"/>
<dbReference type="UniPathway" id="UPA00359">
    <property type="reaction ID" value="UER00482"/>
</dbReference>
<dbReference type="GO" id="GO:0005886">
    <property type="term" value="C:plasma membrane"/>
    <property type="evidence" value="ECO:0007669"/>
    <property type="project" value="TreeGrafter"/>
</dbReference>
<dbReference type="GO" id="GO:0005524">
    <property type="term" value="F:ATP binding"/>
    <property type="evidence" value="ECO:0007669"/>
    <property type="project" value="UniProtKB-UniRule"/>
</dbReference>
<dbReference type="GO" id="GO:0009029">
    <property type="term" value="F:tetraacyldisaccharide 4'-kinase activity"/>
    <property type="evidence" value="ECO:0007669"/>
    <property type="project" value="UniProtKB-UniRule"/>
</dbReference>
<dbReference type="GO" id="GO:0009245">
    <property type="term" value="P:lipid A biosynthetic process"/>
    <property type="evidence" value="ECO:0007669"/>
    <property type="project" value="UniProtKB-UniRule"/>
</dbReference>
<dbReference type="GO" id="GO:0009244">
    <property type="term" value="P:lipopolysaccharide core region biosynthetic process"/>
    <property type="evidence" value="ECO:0007669"/>
    <property type="project" value="TreeGrafter"/>
</dbReference>
<dbReference type="HAMAP" id="MF_00409">
    <property type="entry name" value="LpxK"/>
    <property type="match status" value="1"/>
</dbReference>
<dbReference type="InterPro" id="IPR003758">
    <property type="entry name" value="LpxK"/>
</dbReference>
<dbReference type="InterPro" id="IPR027417">
    <property type="entry name" value="P-loop_NTPase"/>
</dbReference>
<dbReference type="NCBIfam" id="TIGR00682">
    <property type="entry name" value="lpxK"/>
    <property type="match status" value="1"/>
</dbReference>
<dbReference type="PANTHER" id="PTHR42724">
    <property type="entry name" value="TETRAACYLDISACCHARIDE 4'-KINASE"/>
    <property type="match status" value="1"/>
</dbReference>
<dbReference type="PANTHER" id="PTHR42724:SF1">
    <property type="entry name" value="TETRAACYLDISACCHARIDE 4'-KINASE, MITOCHONDRIAL-RELATED"/>
    <property type="match status" value="1"/>
</dbReference>
<dbReference type="Pfam" id="PF02606">
    <property type="entry name" value="LpxK"/>
    <property type="match status" value="1"/>
</dbReference>
<dbReference type="SUPFAM" id="SSF52540">
    <property type="entry name" value="P-loop containing nucleoside triphosphate hydrolases"/>
    <property type="match status" value="1"/>
</dbReference>
<gene>
    <name evidence="1" type="primary">lpxK</name>
    <name type="ordered locus">Xfasm12_0390</name>
</gene>
<proteinExistence type="inferred from homology"/>